<comment type="function">
    <text evidence="1">Bifunctional enzyme that catalyzes both the deamination of dCTP to dUTP and the hydrolysis of dUTP to dUMP without releasing the toxic dUTP intermediate.</text>
</comment>
<comment type="catalytic activity">
    <reaction evidence="1">
        <text>dCTP + 2 H2O = dUMP + NH4(+) + diphosphate</text>
        <dbReference type="Rhea" id="RHEA:19205"/>
        <dbReference type="ChEBI" id="CHEBI:15377"/>
        <dbReference type="ChEBI" id="CHEBI:28938"/>
        <dbReference type="ChEBI" id="CHEBI:33019"/>
        <dbReference type="ChEBI" id="CHEBI:61481"/>
        <dbReference type="ChEBI" id="CHEBI:246422"/>
        <dbReference type="EC" id="3.5.4.30"/>
    </reaction>
</comment>
<comment type="pathway">
    <text evidence="1">Pyrimidine metabolism; dUMP biosynthesis; dUMP from dCTP: step 1/1.</text>
</comment>
<comment type="subunit">
    <text evidence="1">Homotrimer.</text>
</comment>
<comment type="similarity">
    <text evidence="1">Belongs to the dCTP deaminase family.</text>
</comment>
<protein>
    <recommendedName>
        <fullName evidence="1">dCTP deaminase, dUMP-forming</fullName>
        <ecNumber evidence="1">3.5.4.30</ecNumber>
    </recommendedName>
    <alternativeName>
        <fullName evidence="1">Bifunctional dCTP deaminase:dUTPase</fullName>
    </alternativeName>
    <alternativeName>
        <fullName evidence="1">DCD-DUT</fullName>
    </alternativeName>
</protein>
<accession>Q0S5R4</accession>
<reference key="1">
    <citation type="journal article" date="2006" name="Proc. Natl. Acad. Sci. U.S.A.">
        <title>The complete genome of Rhodococcus sp. RHA1 provides insights into a catabolic powerhouse.</title>
        <authorList>
            <person name="McLeod M.P."/>
            <person name="Warren R.L."/>
            <person name="Hsiao W.W.L."/>
            <person name="Araki N."/>
            <person name="Myhre M."/>
            <person name="Fernandes C."/>
            <person name="Miyazawa D."/>
            <person name="Wong W."/>
            <person name="Lillquist A.L."/>
            <person name="Wang D."/>
            <person name="Dosanjh M."/>
            <person name="Hara H."/>
            <person name="Petrescu A."/>
            <person name="Morin R.D."/>
            <person name="Yang G."/>
            <person name="Stott J.M."/>
            <person name="Schein J.E."/>
            <person name="Shin H."/>
            <person name="Smailus D."/>
            <person name="Siddiqui A.S."/>
            <person name="Marra M.A."/>
            <person name="Jones S.J.M."/>
            <person name="Holt R."/>
            <person name="Brinkman F.S.L."/>
            <person name="Miyauchi K."/>
            <person name="Fukuda M."/>
            <person name="Davies J.E."/>
            <person name="Mohn W.W."/>
            <person name="Eltis L.D."/>
        </authorList>
    </citation>
    <scope>NUCLEOTIDE SEQUENCE [LARGE SCALE GENOMIC DNA]</scope>
    <source>
        <strain>RHA1</strain>
    </source>
</reference>
<feature type="chain" id="PRO_1000009798" description="dCTP deaminase, dUMP-forming">
    <location>
        <begin position="1"/>
        <end position="189"/>
    </location>
</feature>
<feature type="active site" description="Proton donor/acceptor" evidence="1">
    <location>
        <position position="129"/>
    </location>
</feature>
<feature type="binding site" evidence="1">
    <location>
        <begin position="101"/>
        <end position="106"/>
    </location>
    <ligand>
        <name>dCTP</name>
        <dbReference type="ChEBI" id="CHEBI:61481"/>
    </ligand>
</feature>
<feature type="binding site" evidence="1">
    <location>
        <position position="119"/>
    </location>
    <ligand>
        <name>dCTP</name>
        <dbReference type="ChEBI" id="CHEBI:61481"/>
    </ligand>
</feature>
<feature type="binding site" evidence="1">
    <location>
        <begin position="127"/>
        <end position="129"/>
    </location>
    <ligand>
        <name>dCTP</name>
        <dbReference type="ChEBI" id="CHEBI:61481"/>
    </ligand>
</feature>
<feature type="binding site" evidence="1">
    <location>
        <position position="148"/>
    </location>
    <ligand>
        <name>dCTP</name>
        <dbReference type="ChEBI" id="CHEBI:61481"/>
    </ligand>
</feature>
<feature type="binding site" evidence="1">
    <location>
        <position position="162"/>
    </location>
    <ligand>
        <name>dCTP</name>
        <dbReference type="ChEBI" id="CHEBI:61481"/>
    </ligand>
</feature>
<feature type="binding site" evidence="1">
    <location>
        <position position="174"/>
    </location>
    <ligand>
        <name>dCTP</name>
        <dbReference type="ChEBI" id="CHEBI:61481"/>
    </ligand>
</feature>
<feature type="site" description="Important for bifunctional activity" evidence="1">
    <location>
        <begin position="116"/>
        <end position="117"/>
    </location>
</feature>
<proteinExistence type="inferred from homology"/>
<evidence type="ECO:0000255" key="1">
    <source>
        <dbReference type="HAMAP-Rule" id="MF_00146"/>
    </source>
</evidence>
<keyword id="KW-0378">Hydrolase</keyword>
<keyword id="KW-0546">Nucleotide metabolism</keyword>
<keyword id="KW-0547">Nucleotide-binding</keyword>
<sequence>MLLSDRDLRAEISAGRLGIDPFDDSMVQPSSVDVRLDSLFRVFNNTRYTHIDPAQRQDELTTLVEPAEGEPFVLHPGEFVLGSTLEVCSLPDDLAGRLEGKSSLGRLGLLTHSTAGFIDPGFNGHITLELSNVANLPITLWPGMKIGQLCLLRLSSAAEHPYGSSAVGSKYQGQRGPTPSKAYLNFAQS</sequence>
<dbReference type="EC" id="3.5.4.30" evidence="1"/>
<dbReference type="EMBL" id="CP000431">
    <property type="protein sequence ID" value="ABG97122.1"/>
    <property type="molecule type" value="Genomic_DNA"/>
</dbReference>
<dbReference type="RefSeq" id="WP_005238072.1">
    <property type="nucleotide sequence ID" value="NC_008268.1"/>
</dbReference>
<dbReference type="SMR" id="Q0S5R4"/>
<dbReference type="GeneID" id="69889723"/>
<dbReference type="KEGG" id="rha:RHA1_ro05342"/>
<dbReference type="eggNOG" id="COG0717">
    <property type="taxonomic scope" value="Bacteria"/>
</dbReference>
<dbReference type="HOGENOM" id="CLU_087476_2_0_11"/>
<dbReference type="OrthoDB" id="9780956at2"/>
<dbReference type="UniPathway" id="UPA00610">
    <property type="reaction ID" value="UER00667"/>
</dbReference>
<dbReference type="Proteomes" id="UP000008710">
    <property type="component" value="Chromosome"/>
</dbReference>
<dbReference type="GO" id="GO:0033973">
    <property type="term" value="F:dCTP deaminase (dUMP-forming) activity"/>
    <property type="evidence" value="ECO:0007669"/>
    <property type="project" value="UniProtKB-UniRule"/>
</dbReference>
<dbReference type="GO" id="GO:0008829">
    <property type="term" value="F:dCTP deaminase activity"/>
    <property type="evidence" value="ECO:0007669"/>
    <property type="project" value="InterPro"/>
</dbReference>
<dbReference type="GO" id="GO:0000166">
    <property type="term" value="F:nucleotide binding"/>
    <property type="evidence" value="ECO:0007669"/>
    <property type="project" value="UniProtKB-KW"/>
</dbReference>
<dbReference type="GO" id="GO:0006226">
    <property type="term" value="P:dUMP biosynthetic process"/>
    <property type="evidence" value="ECO:0007669"/>
    <property type="project" value="UniProtKB-UniRule"/>
</dbReference>
<dbReference type="GO" id="GO:0006229">
    <property type="term" value="P:dUTP biosynthetic process"/>
    <property type="evidence" value="ECO:0007669"/>
    <property type="project" value="InterPro"/>
</dbReference>
<dbReference type="GO" id="GO:0015949">
    <property type="term" value="P:nucleobase-containing small molecule interconversion"/>
    <property type="evidence" value="ECO:0007669"/>
    <property type="project" value="TreeGrafter"/>
</dbReference>
<dbReference type="CDD" id="cd07557">
    <property type="entry name" value="trimeric_dUTPase"/>
    <property type="match status" value="1"/>
</dbReference>
<dbReference type="FunFam" id="2.70.40.10:FF:000005">
    <property type="entry name" value="dCTP deaminase, dUMP-forming"/>
    <property type="match status" value="1"/>
</dbReference>
<dbReference type="Gene3D" id="2.70.40.10">
    <property type="match status" value="1"/>
</dbReference>
<dbReference type="HAMAP" id="MF_00146">
    <property type="entry name" value="dCTP_deaminase"/>
    <property type="match status" value="1"/>
</dbReference>
<dbReference type="InterPro" id="IPR011962">
    <property type="entry name" value="dCTP_deaminase"/>
</dbReference>
<dbReference type="InterPro" id="IPR036157">
    <property type="entry name" value="dUTPase-like_sf"/>
</dbReference>
<dbReference type="InterPro" id="IPR033704">
    <property type="entry name" value="dUTPase_trimeric"/>
</dbReference>
<dbReference type="NCBIfam" id="TIGR02274">
    <property type="entry name" value="dCTP_deam"/>
    <property type="match status" value="1"/>
</dbReference>
<dbReference type="PANTHER" id="PTHR42680">
    <property type="entry name" value="DCTP DEAMINASE"/>
    <property type="match status" value="1"/>
</dbReference>
<dbReference type="PANTHER" id="PTHR42680:SF3">
    <property type="entry name" value="DCTP DEAMINASE"/>
    <property type="match status" value="1"/>
</dbReference>
<dbReference type="Pfam" id="PF22769">
    <property type="entry name" value="DCD"/>
    <property type="match status" value="1"/>
</dbReference>
<dbReference type="SUPFAM" id="SSF51283">
    <property type="entry name" value="dUTPase-like"/>
    <property type="match status" value="1"/>
</dbReference>
<name>DCDB_RHOJR</name>
<organism>
    <name type="scientific">Rhodococcus jostii (strain RHA1)</name>
    <dbReference type="NCBI Taxonomy" id="101510"/>
    <lineage>
        <taxon>Bacteria</taxon>
        <taxon>Bacillati</taxon>
        <taxon>Actinomycetota</taxon>
        <taxon>Actinomycetes</taxon>
        <taxon>Mycobacteriales</taxon>
        <taxon>Nocardiaceae</taxon>
        <taxon>Rhodococcus</taxon>
    </lineage>
</organism>
<gene>
    <name evidence="1" type="primary">dcd</name>
    <name type="ordered locus">RHA1_ro05342</name>
</gene>